<proteinExistence type="evidence at transcript level"/>
<sequence length="840" mass="95237">MKNWGSSDSGGSEDPPQEDSCLDPLDGDPNSRPVPAKPHIFPTAKSRSRLFGKCDSEEASMDCSYEEGQLASCPAITVSPVVMIPKHEDGPTCARQPSQDSVTAGSEKSLKLYDRRKIFEAVAQNNCEELQSLLLFLQKSKKHLMDSEFKDPETGKTCLLKAMLNLHDGQNDTIPLLLEIARQTDSLKELVNASYTDSYYKGQTALHIAIERRNMALVTLLVENGADVQAAANGDFFKKTKGRPGFYFGELPLSLAACTNQLGIVKFLLQNSWQPADISARDSVGNTVLHALVEVADNTADNTKFVTSMYNEILILGAKLHPTLKLEGLTNKKGLTPLALAARSGKIGVLAYILQREIQEPECRHLSRKFTEWAYGPVHSSLYDLSCIDTCEKNSVLEVIAYSSSETPNRHDMLLVEPLNRLLQDKWDRFVKRIFYFNFFIYCLYMIIFTTAAYYRPVDGLPPYKLKHTVGDYFRVTGEILSVLGGVYFFFRGIQYFLQRRPSLKTLFVDSYSEMLFFVQSLFMLGTVVLYFCHHKEYVASMVFSLAMGWTNMLYYTRGFQQMGIYAVMIEKMILRDLCRFMFVYLVFLFGFSTAVVTLIEDGKNNSVPTESTLHRWRGPGCRPPDSSYNSLYSTCLELFKFTIGMGDLEFTENYDFKAVFIILLLAYVILTYILLLNMLIALMGETVNKIAQESKNIWKLQRAITILDTEKSFLKCMRKAFRSGKLLQVGYTPDGKDDYRWCFRVDEVNWTTWNTNVGIINEDPGNCEGIKRTLSFSLRSGRVSGRNWKNFSLVPLLRDASTRERHPAQPEEVHLRHFAGSLKPEDAEIFKDPVGLGEK</sequence>
<comment type="function">
    <text evidence="1">Non-selective calcium permeant cation channel involved in detection of noxious chemical and thermal stimuli (By similarity). Seems to mediate proton influx and may be involved in intracellular acidosis in nociceptive neurons. Involved in mediation of inflammatory pain and hyperalgesia. Sensitized by a phosphatidylinositol second messenger system activated by receptor tyrosine kinases, which involves PKC isozymes and PCL. Activated by vanilloids, like capsaicin, and temperatures higher than 42 degrees Celsius (By similarity). Upon activation, exhibits a time- and Ca(2+)-dependent outward rectification, followed by a long-lasting refractory state. Mild extracellular acidic pH (6.5) potentiates channel activation by noxious heat and vanilloids, whereas acidic conditions (pH &lt;6) directly activate the channel. Can be activated by endogenous compounds, including 12-hydroperoxytetraenoic acid and bradykinin. Acts as ionotropic endocannabinoid receptor with central neuromodulatory effects. Triggers a form of long-term depression (TRPV1-LTD) mediated by the endocannabinoid anandamine in the hippocampus and nucleus accumbens by affecting AMPA receptors endocytosis.</text>
</comment>
<comment type="catalytic activity">
    <reaction evidence="1">
        <text>Ca(2+)(in) = Ca(2+)(out)</text>
        <dbReference type="Rhea" id="RHEA:29671"/>
        <dbReference type="ChEBI" id="CHEBI:29108"/>
    </reaction>
</comment>
<comment type="catalytic activity">
    <reaction evidence="1">
        <text>Mg(2+)(in) = Mg(2+)(out)</text>
        <dbReference type="Rhea" id="RHEA:29827"/>
        <dbReference type="ChEBI" id="CHEBI:18420"/>
    </reaction>
</comment>
<comment type="catalytic activity">
    <reaction evidence="1">
        <text>Na(+)(in) = Na(+)(out)</text>
        <dbReference type="Rhea" id="RHEA:34963"/>
        <dbReference type="ChEBI" id="CHEBI:29101"/>
    </reaction>
</comment>
<comment type="catalytic activity">
    <reaction evidence="1">
        <text>K(+)(in) = K(+)(out)</text>
        <dbReference type="Rhea" id="RHEA:29463"/>
        <dbReference type="ChEBI" id="CHEBI:29103"/>
    </reaction>
</comment>
<comment type="activity regulation">
    <text evidence="1 2">Channel activity is activated via the interaction with PIRT and phosphatidylinositol 4,5-bisphosphate (PIP2). Both PIRT and PIP2 are required to activate channel activity. The channel is sensitized by ATP binding. Repeated stimulation with capsaicin gives rise to progressively smaller responses, due to desensitization. This desensitization is triggered by the influx of calcium ions and is inhibited by elevated ATP levels. Ca(2+) and CALM displace ATP from its binding site and trigger a conformation change that leads to a closed, desensitized channel. Intracellular PIP2 inhibits desensitization. The double-knot toxin (DkTx) from the Chinese earth tiger tarantula activates the channel and traps it in an open conformation (By similarity). The Scolopendra mutilans RhTx toxin potentiates the heat activation pathway mediated by this channel by binding to the charge-rich outer pore region (in an activated state) (By similarity).</text>
</comment>
<comment type="subunit">
    <text evidence="1 2 3">Homotetramer (By similarity). Interacts with PIRT (By similarity). May also form a heteromeric channel with TRPV3. Interacts with CALM, PRKCM and CSK. Interacts with PRKCG and NTRK1, probably by forming a trimeric complex (By similarity). Interacts with the Scolopendra mutilans RhTx toxin (By similarity). Interacts with TMEM100 (By similarity). Interacts with PACS2 (By similarity).</text>
</comment>
<comment type="subcellular location">
    <subcellularLocation>
        <location evidence="1">Postsynaptic cell membrane</location>
        <topology evidence="1">Multi-pass membrane protein</topology>
    </subcellularLocation>
    <subcellularLocation>
        <location evidence="1">Cell projection</location>
        <location evidence="1">Dendritic spine membrane</location>
        <topology evidence="1">Multi-pass membrane protein</topology>
    </subcellularLocation>
    <subcellularLocation>
        <location evidence="1">Cell membrane</location>
        <topology evidence="1">Multi-pass membrane protein</topology>
    </subcellularLocation>
    <text evidence="1">Mostly, but not exclusively expressed in postsynaptic dendritic spines.</text>
</comment>
<comment type="domain">
    <text evidence="1">The association domain (AD) is necessary for self-association.</text>
</comment>
<comment type="PTM">
    <text evidence="1">Phosphorylation by PKA reverses capsaicin-induced dephosphorylation at multiple sites. Phosphorylation by CAMKII seems to regulate binding to vanilloids. Phosphorylated and modulated by PRKCE, PRKCM and probably PRKCZ. Dephosphorylation by calcineurin seems to lead to receptor desensitization and phosphorylation by CAMKII recovers activity.</text>
</comment>
<comment type="similarity">
    <text evidence="6">Belongs to the transient receptor (TC 1.A.4) family. TrpV subfamily. TRPV1 sub-subfamily.</text>
</comment>
<organism>
    <name type="scientific">Canis lupus familiaris</name>
    <name type="common">Dog</name>
    <name type="synonym">Canis familiaris</name>
    <dbReference type="NCBI Taxonomy" id="9615"/>
    <lineage>
        <taxon>Eukaryota</taxon>
        <taxon>Metazoa</taxon>
        <taxon>Chordata</taxon>
        <taxon>Craniata</taxon>
        <taxon>Vertebrata</taxon>
        <taxon>Euteleostomi</taxon>
        <taxon>Mammalia</taxon>
        <taxon>Eutheria</taxon>
        <taxon>Laurasiatheria</taxon>
        <taxon>Carnivora</taxon>
        <taxon>Caniformia</taxon>
        <taxon>Canidae</taxon>
        <taxon>Canis</taxon>
    </lineage>
</organism>
<reference key="1">
    <citation type="submission" date="2004-03" db="EMBL/GenBank/DDBJ databases">
        <title>Cloning and functional characterization of dog TRPV1.</title>
        <authorList>
            <person name="Phelps P.T."/>
            <person name="Anthes J.C."/>
            <person name="Correll C.C."/>
        </authorList>
    </citation>
    <scope>NUCLEOTIDE SEQUENCE [MRNA]</scope>
</reference>
<keyword id="KW-0040">ANK repeat</keyword>
<keyword id="KW-0067">ATP-binding</keyword>
<keyword id="KW-0106">Calcium</keyword>
<keyword id="KW-0107">Calcium channel</keyword>
<keyword id="KW-0109">Calcium transport</keyword>
<keyword id="KW-0112">Calmodulin-binding</keyword>
<keyword id="KW-1003">Cell membrane</keyword>
<keyword id="KW-0966">Cell projection</keyword>
<keyword id="KW-0325">Glycoprotein</keyword>
<keyword id="KW-0407">Ion channel</keyword>
<keyword id="KW-0406">Ion transport</keyword>
<keyword id="KW-0472">Membrane</keyword>
<keyword id="KW-0479">Metal-binding</keyword>
<keyword id="KW-0547">Nucleotide-binding</keyword>
<keyword id="KW-0597">Phosphoprotein</keyword>
<keyword id="KW-0628">Postsynaptic cell membrane</keyword>
<keyword id="KW-1185">Reference proteome</keyword>
<keyword id="KW-0677">Repeat</keyword>
<keyword id="KW-0915">Sodium</keyword>
<keyword id="KW-0770">Synapse</keyword>
<keyword id="KW-0812">Transmembrane</keyword>
<keyword id="KW-1133">Transmembrane helix</keyword>
<keyword id="KW-0813">Transport</keyword>
<accession>Q697L1</accession>
<gene>
    <name type="primary">TRPV1</name>
</gene>
<name>TRPV1_CANLF</name>
<dbReference type="EMBL" id="AY568758">
    <property type="protein sequence ID" value="AAT71314.1"/>
    <property type="molecule type" value="mRNA"/>
</dbReference>
<dbReference type="RefSeq" id="NP_001003970.1">
    <property type="nucleotide sequence ID" value="NM_001003970.1"/>
</dbReference>
<dbReference type="SMR" id="Q697L1"/>
<dbReference type="FunCoup" id="Q697L1">
    <property type="interactions" value="14"/>
</dbReference>
<dbReference type="STRING" id="9615.ENSCAFP00000028568"/>
<dbReference type="ChEMBL" id="CHEMBL5254"/>
<dbReference type="GlyCosmos" id="Q697L1">
    <property type="glycosylation" value="1 site, No reported glycans"/>
</dbReference>
<dbReference type="PaxDb" id="9612-ENSCAFP00000028568"/>
<dbReference type="Ensembl" id="ENSCAFT00030019193.1">
    <property type="protein sequence ID" value="ENSCAFP00030016743.1"/>
    <property type="gene ID" value="ENSCAFG00030010048.1"/>
</dbReference>
<dbReference type="Ensembl" id="ENSCAFT00040007666.1">
    <property type="protein sequence ID" value="ENSCAFP00040006693.1"/>
    <property type="gene ID" value="ENSCAFG00040003970.1"/>
</dbReference>
<dbReference type="GeneID" id="445457"/>
<dbReference type="KEGG" id="cfa:445457"/>
<dbReference type="CTD" id="7442"/>
<dbReference type="eggNOG" id="KOG3676">
    <property type="taxonomic scope" value="Eukaryota"/>
</dbReference>
<dbReference type="InParanoid" id="Q697L1"/>
<dbReference type="OrthoDB" id="533508at2759"/>
<dbReference type="Reactome" id="R-CFA-3295583">
    <property type="pathway name" value="TRP channels"/>
</dbReference>
<dbReference type="PRO" id="PR:Q697L1"/>
<dbReference type="Proteomes" id="UP000002254">
    <property type="component" value="Unplaced"/>
</dbReference>
<dbReference type="Proteomes" id="UP000694429">
    <property type="component" value="Chromosome 9"/>
</dbReference>
<dbReference type="Proteomes" id="UP000694542">
    <property type="component" value="Chromosome 9"/>
</dbReference>
<dbReference type="Proteomes" id="UP000805418">
    <property type="component" value="Unplaced"/>
</dbReference>
<dbReference type="GO" id="GO:0032591">
    <property type="term" value="C:dendritic spine membrane"/>
    <property type="evidence" value="ECO:0007669"/>
    <property type="project" value="UniProtKB-SubCell"/>
</dbReference>
<dbReference type="GO" id="GO:0016020">
    <property type="term" value="C:membrane"/>
    <property type="evidence" value="ECO:0000250"/>
    <property type="project" value="UniProtKB"/>
</dbReference>
<dbReference type="GO" id="GO:0005886">
    <property type="term" value="C:plasma membrane"/>
    <property type="evidence" value="ECO:0000250"/>
    <property type="project" value="UniProtKB"/>
</dbReference>
<dbReference type="GO" id="GO:0045211">
    <property type="term" value="C:postsynaptic membrane"/>
    <property type="evidence" value="ECO:0000250"/>
    <property type="project" value="UniProtKB"/>
</dbReference>
<dbReference type="GO" id="GO:0005524">
    <property type="term" value="F:ATP binding"/>
    <property type="evidence" value="ECO:0000250"/>
    <property type="project" value="UniProtKB"/>
</dbReference>
<dbReference type="GO" id="GO:0005262">
    <property type="term" value="F:calcium channel activity"/>
    <property type="evidence" value="ECO:0000318"/>
    <property type="project" value="GO_Central"/>
</dbReference>
<dbReference type="GO" id="GO:0005516">
    <property type="term" value="F:calmodulin binding"/>
    <property type="evidence" value="ECO:0000250"/>
    <property type="project" value="UniProtKB"/>
</dbReference>
<dbReference type="GO" id="GO:0005231">
    <property type="term" value="F:excitatory extracellular ligand-gated monoatomic ion channel activity"/>
    <property type="evidence" value="ECO:0000250"/>
    <property type="project" value="UniProtKB"/>
</dbReference>
<dbReference type="GO" id="GO:0005230">
    <property type="term" value="F:extracellular ligand-gated monoatomic ion channel activity"/>
    <property type="evidence" value="ECO:0000250"/>
    <property type="project" value="UniProtKB"/>
</dbReference>
<dbReference type="GO" id="GO:0015278">
    <property type="term" value="F:intracellularly gated calcium channel activity"/>
    <property type="evidence" value="ECO:0000250"/>
    <property type="project" value="UniProtKB"/>
</dbReference>
<dbReference type="GO" id="GO:0046872">
    <property type="term" value="F:metal ion binding"/>
    <property type="evidence" value="ECO:0007669"/>
    <property type="project" value="UniProtKB-KW"/>
</dbReference>
<dbReference type="GO" id="GO:0035091">
    <property type="term" value="F:phosphatidylinositol binding"/>
    <property type="evidence" value="ECO:0000250"/>
    <property type="project" value="UniProtKB"/>
</dbReference>
<dbReference type="GO" id="GO:0004888">
    <property type="term" value="F:transmembrane signaling receptor activity"/>
    <property type="evidence" value="ECO:0000250"/>
    <property type="project" value="UniProtKB"/>
</dbReference>
<dbReference type="GO" id="GO:0098703">
    <property type="term" value="P:calcium ion import across plasma membrane"/>
    <property type="evidence" value="ECO:0000250"/>
    <property type="project" value="UniProtKB"/>
</dbReference>
<dbReference type="GO" id="GO:0070588">
    <property type="term" value="P:calcium ion transmembrane transport"/>
    <property type="evidence" value="ECO:0000250"/>
    <property type="project" value="UniProtKB"/>
</dbReference>
<dbReference type="GO" id="GO:0071468">
    <property type="term" value="P:cellular response to acidic pH"/>
    <property type="evidence" value="ECO:0000250"/>
    <property type="project" value="UniProtKB"/>
</dbReference>
<dbReference type="GO" id="GO:0071312">
    <property type="term" value="P:cellular response to alkaloid"/>
    <property type="evidence" value="ECO:0000250"/>
    <property type="project" value="UniProtKB"/>
</dbReference>
<dbReference type="GO" id="GO:0071318">
    <property type="term" value="P:cellular response to ATP"/>
    <property type="evidence" value="ECO:0000250"/>
    <property type="project" value="UniProtKB"/>
</dbReference>
<dbReference type="GO" id="GO:0034605">
    <property type="term" value="P:cellular response to heat"/>
    <property type="evidence" value="ECO:0000250"/>
    <property type="project" value="UniProtKB"/>
</dbReference>
<dbReference type="GO" id="GO:0051289">
    <property type="term" value="P:protein homotetramerization"/>
    <property type="evidence" value="ECO:0000250"/>
    <property type="project" value="UniProtKB"/>
</dbReference>
<dbReference type="GO" id="GO:1901594">
    <property type="term" value="P:response to capsazepine"/>
    <property type="evidence" value="ECO:0000250"/>
    <property type="project" value="UniProtKB"/>
</dbReference>
<dbReference type="CDD" id="cd22196">
    <property type="entry name" value="TRPV1"/>
    <property type="match status" value="1"/>
</dbReference>
<dbReference type="FunFam" id="1.10.287.70:FF:000074">
    <property type="entry name" value="Transient receptor potential cation channel subfamily V member 1"/>
    <property type="match status" value="1"/>
</dbReference>
<dbReference type="FunFam" id="1.25.40.20:FF:000018">
    <property type="entry name" value="Transient receptor potential cation channel subfamily V member 1"/>
    <property type="match status" value="1"/>
</dbReference>
<dbReference type="Gene3D" id="1.10.287.70">
    <property type="match status" value="1"/>
</dbReference>
<dbReference type="Gene3D" id="1.25.40.20">
    <property type="entry name" value="Ankyrin repeat-containing domain"/>
    <property type="match status" value="1"/>
</dbReference>
<dbReference type="InterPro" id="IPR002110">
    <property type="entry name" value="Ankyrin_rpt"/>
</dbReference>
<dbReference type="InterPro" id="IPR036770">
    <property type="entry name" value="Ankyrin_rpt-contain_sf"/>
</dbReference>
<dbReference type="InterPro" id="IPR005821">
    <property type="entry name" value="Ion_trans_dom"/>
</dbReference>
<dbReference type="InterPro" id="IPR024862">
    <property type="entry name" value="TRPV"/>
</dbReference>
<dbReference type="InterPro" id="IPR008347">
    <property type="entry name" value="TrpV1-4"/>
</dbReference>
<dbReference type="NCBIfam" id="TIGR00870">
    <property type="entry name" value="trp"/>
    <property type="match status" value="1"/>
</dbReference>
<dbReference type="PANTHER" id="PTHR10582:SF17">
    <property type="entry name" value="TRANSIENT RECEPTOR POTENTIAL CATION CHANNEL SUBFAMILY V MEMBER 1"/>
    <property type="match status" value="1"/>
</dbReference>
<dbReference type="PANTHER" id="PTHR10582">
    <property type="entry name" value="TRANSIENT RECEPTOR POTENTIAL ION CHANNEL PROTEIN"/>
    <property type="match status" value="1"/>
</dbReference>
<dbReference type="Pfam" id="PF00023">
    <property type="entry name" value="Ank"/>
    <property type="match status" value="1"/>
</dbReference>
<dbReference type="Pfam" id="PF12796">
    <property type="entry name" value="Ank_2"/>
    <property type="match status" value="1"/>
</dbReference>
<dbReference type="Pfam" id="PF00520">
    <property type="entry name" value="Ion_trans"/>
    <property type="match status" value="1"/>
</dbReference>
<dbReference type="PRINTS" id="PR01768">
    <property type="entry name" value="TRPVRECEPTOR"/>
</dbReference>
<dbReference type="SMART" id="SM00248">
    <property type="entry name" value="ANK"/>
    <property type="match status" value="4"/>
</dbReference>
<dbReference type="SUPFAM" id="SSF48403">
    <property type="entry name" value="Ankyrin repeat"/>
    <property type="match status" value="1"/>
</dbReference>
<dbReference type="PROSITE" id="PS50297">
    <property type="entry name" value="ANK_REP_REGION"/>
    <property type="match status" value="1"/>
</dbReference>
<dbReference type="PROSITE" id="PS50088">
    <property type="entry name" value="ANK_REPEAT"/>
    <property type="match status" value="1"/>
</dbReference>
<evidence type="ECO:0000250" key="1">
    <source>
        <dbReference type="UniProtKB" id="O35433"/>
    </source>
</evidence>
<evidence type="ECO:0000250" key="2">
    <source>
        <dbReference type="UniProtKB" id="Q704Y3"/>
    </source>
</evidence>
<evidence type="ECO:0000250" key="3">
    <source>
        <dbReference type="UniProtKB" id="Q8NER1"/>
    </source>
</evidence>
<evidence type="ECO:0000250" key="4">
    <source>
        <dbReference type="UniProtKB" id="Q9R186"/>
    </source>
</evidence>
<evidence type="ECO:0000256" key="5">
    <source>
        <dbReference type="SAM" id="MobiDB-lite"/>
    </source>
</evidence>
<evidence type="ECO:0000305" key="6"/>
<feature type="chain" id="PRO_0000215336" description="Transient receptor potential cation channel subfamily V member 1">
    <location>
        <begin position="1"/>
        <end position="840"/>
    </location>
</feature>
<feature type="topological domain" description="Cytoplasmic" evidence="3">
    <location>
        <begin position="1"/>
        <end position="433"/>
    </location>
</feature>
<feature type="transmembrane region" description="Helical; Name=S1" evidence="3">
    <location>
        <begin position="434"/>
        <end position="455"/>
    </location>
</feature>
<feature type="topological domain" description="Extracellular" evidence="3">
    <location>
        <begin position="456"/>
        <end position="473"/>
    </location>
</feature>
<feature type="transmembrane region" description="Helical; Name=S2" evidence="3">
    <location>
        <begin position="474"/>
        <end position="498"/>
    </location>
</feature>
<feature type="topological domain" description="Cytoplasmic" evidence="3">
    <location>
        <begin position="499"/>
        <end position="511"/>
    </location>
</feature>
<feature type="transmembrane region" description="Helical; Name=S3" evidence="3">
    <location>
        <begin position="512"/>
        <end position="533"/>
    </location>
</feature>
<feature type="topological domain" description="Extracellular" evidence="3">
    <location>
        <begin position="534"/>
        <end position="536"/>
    </location>
</feature>
<feature type="transmembrane region" description="Helical; Name=S4" evidence="3">
    <location>
        <begin position="537"/>
        <end position="557"/>
    </location>
</feature>
<feature type="topological domain" description="Cytoplasmic" evidence="3">
    <location>
        <begin position="558"/>
        <end position="560"/>
    </location>
</feature>
<feature type="transmembrane region" description="Helical; Name=S5" evidence="3">
    <location>
        <begin position="561"/>
        <end position="599"/>
    </location>
</feature>
<feature type="topological domain" description="Extracellular" evidence="3">
    <location>
        <begin position="600"/>
        <end position="631"/>
    </location>
</feature>
<feature type="intramembrane region" description="Pore-forming" evidence="3">
    <location>
        <begin position="632"/>
        <end position="653"/>
    </location>
</feature>
<feature type="topological domain" description="Extracellular" evidence="3">
    <location>
        <begin position="654"/>
        <end position="657"/>
    </location>
</feature>
<feature type="transmembrane region" description="Helical; Name=S6" evidence="3">
    <location>
        <begin position="658"/>
        <end position="684"/>
    </location>
</feature>
<feature type="topological domain" description="Cytoplasmic" evidence="3">
    <location>
        <begin position="685"/>
        <end position="840"/>
    </location>
</feature>
<feature type="repeat" description="ANK 1" evidence="3">
    <location>
        <begin position="111"/>
        <end position="139"/>
    </location>
</feature>
<feature type="repeat" description="ANK 2" evidence="3">
    <location>
        <begin position="154"/>
        <end position="186"/>
    </location>
</feature>
<feature type="repeat" description="ANK 3" evidence="3">
    <location>
        <begin position="204"/>
        <end position="229"/>
    </location>
</feature>
<feature type="repeat" description="ANK 4" evidence="3">
    <location>
        <begin position="250"/>
        <end position="277"/>
    </location>
</feature>
<feature type="repeat" description="ANK 5" evidence="3">
    <location>
        <begin position="286"/>
        <end position="322"/>
    </location>
</feature>
<feature type="repeat" description="ANK 6" evidence="3">
    <location>
        <begin position="336"/>
        <end position="359"/>
    </location>
</feature>
<feature type="repeat" description="ANK 7" evidence="3">
    <location>
        <begin position="394"/>
        <end position="416"/>
    </location>
</feature>
<feature type="region of interest" description="Disordered" evidence="5">
    <location>
        <begin position="1"/>
        <end position="43"/>
    </location>
</feature>
<feature type="region of interest" description="AD" evidence="1">
    <location>
        <begin position="686"/>
        <end position="714"/>
    </location>
</feature>
<feature type="region of interest" description="Interaction with calmodulin" evidence="1">
    <location>
        <begin position="769"/>
        <end position="803"/>
    </location>
</feature>
<feature type="region of interest" description="Required for PIP2-mediated channel inhibition" evidence="1">
    <location>
        <begin position="779"/>
        <end position="794"/>
    </location>
</feature>
<feature type="short sequence motif" description="Selectivity filter" evidence="1">
    <location>
        <begin position="645"/>
        <end position="648"/>
    </location>
</feature>
<feature type="compositionally biased region" description="Low complexity" evidence="5">
    <location>
        <begin position="1"/>
        <end position="12"/>
    </location>
</feature>
<feature type="binding site" evidence="1">
    <location>
        <position position="116"/>
    </location>
    <ligand>
        <name>ATP</name>
        <dbReference type="ChEBI" id="CHEBI:30616"/>
    </ligand>
</feature>
<feature type="binding site" evidence="1">
    <location>
        <position position="156"/>
    </location>
    <ligand>
        <name>ATP</name>
        <dbReference type="ChEBI" id="CHEBI:30616"/>
    </ligand>
</feature>
<feature type="binding site" evidence="1">
    <location>
        <position position="161"/>
    </location>
    <ligand>
        <name>ATP</name>
        <dbReference type="ChEBI" id="CHEBI:30616"/>
    </ligand>
</feature>
<feature type="binding site" evidence="1">
    <location>
        <position position="165"/>
    </location>
    <ligand>
        <name>ATP</name>
        <dbReference type="ChEBI" id="CHEBI:30616"/>
    </ligand>
</feature>
<feature type="binding site" evidence="1">
    <location>
        <begin position="200"/>
        <end position="203"/>
    </location>
    <ligand>
        <name>ATP</name>
        <dbReference type="ChEBI" id="CHEBI:30616"/>
    </ligand>
</feature>
<feature type="binding site" evidence="1">
    <location>
        <begin position="211"/>
        <end position="212"/>
    </location>
    <ligand>
        <name>ATP</name>
        <dbReference type="ChEBI" id="CHEBI:30616"/>
    </ligand>
</feature>
<feature type="binding site" evidence="1">
    <location>
        <begin position="512"/>
        <end position="513"/>
    </location>
    <ligand>
        <name>resiniferatoxin</name>
        <dbReference type="ChEBI" id="CHEBI:8809"/>
        <note>agonist</note>
    </ligand>
</feature>
<feature type="binding site" evidence="1">
    <location>
        <position position="551"/>
    </location>
    <ligand>
        <name>resiniferatoxin</name>
        <dbReference type="ChEBI" id="CHEBI:8809"/>
        <note>agonist</note>
    </ligand>
</feature>
<feature type="binding site" evidence="1">
    <location>
        <position position="558"/>
    </location>
    <ligand>
        <name>resiniferatoxin</name>
        <dbReference type="ChEBI" id="CHEBI:8809"/>
        <note>agonist</note>
    </ligand>
</feature>
<feature type="binding site" evidence="3">
    <location>
        <position position="645"/>
    </location>
    <ligand>
        <name>Na(+)</name>
        <dbReference type="ChEBI" id="CHEBI:29101"/>
        <label>1</label>
        <note>ligand shared among four neighboring subunits</note>
    </ligand>
</feature>
<feature type="binding site" evidence="3">
    <location>
        <position position="645"/>
    </location>
    <ligand>
        <name>Na(+)</name>
        <dbReference type="ChEBI" id="CHEBI:29101"/>
        <label>2</label>
        <note>ligand shared among four neighboring subunits</note>
    </ligand>
</feature>
<feature type="binding site" evidence="4">
    <location>
        <position position="648"/>
    </location>
    <ligand>
        <name>Ca(2+)</name>
        <dbReference type="ChEBI" id="CHEBI:29108"/>
        <note>ligand shared between two neighboring subunits</note>
    </ligand>
</feature>
<feature type="modified residue" description="Phosphothreonine; by PKA; in vitro" evidence="1">
    <location>
        <position position="371"/>
    </location>
</feature>
<feature type="modified residue" description="Phosphoserine; by PKC/PRKCE" evidence="1">
    <location>
        <position position="503"/>
    </location>
</feature>
<feature type="modified residue" description="Phosphothreonine" evidence="1">
    <location>
        <position position="706"/>
    </location>
</feature>
<feature type="modified residue" description="Phosphoserine" evidence="1">
    <location>
        <position position="776"/>
    </location>
</feature>
<feature type="modified residue" description="Phosphoserine; by PKC/PRKCE and PKC/PRKCZ" evidence="1">
    <location>
        <position position="802"/>
    </location>
</feature>
<feature type="modified residue" description="Phosphoserine" evidence="1">
    <location>
        <position position="822"/>
    </location>
</feature>
<feature type="glycosylation site" description="N-linked (GlcNAc...) asparagine" evidence="1">
    <location>
        <position position="605"/>
    </location>
</feature>
<protein>
    <recommendedName>
        <fullName>Transient receptor potential cation channel subfamily V member 1</fullName>
        <shortName>TrpV1</shortName>
    </recommendedName>
    <alternativeName>
        <fullName>Osm-9-like TRP channel 1</fullName>
        <shortName>OTRPC1</shortName>
    </alternativeName>
    <alternativeName>
        <fullName>Vanilloid receptor 1</fullName>
    </alternativeName>
</protein>